<evidence type="ECO:0000255" key="1">
    <source>
        <dbReference type="HAMAP-Rule" id="MF_01661"/>
    </source>
</evidence>
<sequence>MKKSAVLNEHISKAIATIGHFDLLTINDAGMPIPNDHRRIDLAVTKNLPRFIDVLATVLEEMEIQKIYLAEEIKEHNPTQLQQIKQLISSEIEIIFIPHEEMKSNLAHPLNKGNIRTGETTPYSNIALESNVTF</sequence>
<feature type="chain" id="PRO_0000346265" description="D-ribose pyranase">
    <location>
        <begin position="1"/>
        <end position="134"/>
    </location>
</feature>
<feature type="active site" description="Proton donor" evidence="1">
    <location>
        <position position="20"/>
    </location>
</feature>
<feature type="binding site" evidence="1">
    <location>
        <position position="28"/>
    </location>
    <ligand>
        <name>substrate</name>
    </ligand>
</feature>
<feature type="binding site" evidence="1">
    <location>
        <position position="99"/>
    </location>
    <ligand>
        <name>substrate</name>
    </ligand>
</feature>
<feature type="binding site" evidence="1">
    <location>
        <begin position="123"/>
        <end position="125"/>
    </location>
    <ligand>
        <name>substrate</name>
    </ligand>
</feature>
<protein>
    <recommendedName>
        <fullName evidence="1">D-ribose pyranase</fullName>
        <ecNumber evidence="1">5.4.99.62</ecNumber>
    </recommendedName>
</protein>
<accession>Q6GK42</accession>
<name>RBSD_STAAR</name>
<gene>
    <name evidence="1" type="primary">rbsD</name>
    <name type="ordered locus">SAR0267</name>
</gene>
<comment type="function">
    <text evidence="1">Catalyzes the interconversion of beta-pyran and beta-furan forms of D-ribose.</text>
</comment>
<comment type="catalytic activity">
    <reaction evidence="1">
        <text>beta-D-ribopyranose = beta-D-ribofuranose</text>
        <dbReference type="Rhea" id="RHEA:25432"/>
        <dbReference type="ChEBI" id="CHEBI:27476"/>
        <dbReference type="ChEBI" id="CHEBI:47002"/>
        <dbReference type="EC" id="5.4.99.62"/>
    </reaction>
</comment>
<comment type="pathway">
    <text evidence="1">Carbohydrate metabolism; D-ribose degradation; D-ribose 5-phosphate from beta-D-ribopyranose: step 1/2.</text>
</comment>
<comment type="subunit">
    <text evidence="1">Homodecamer.</text>
</comment>
<comment type="subcellular location">
    <subcellularLocation>
        <location evidence="1">Cytoplasm</location>
    </subcellularLocation>
</comment>
<comment type="similarity">
    <text evidence="1">Belongs to the RbsD / FucU family. RbsD subfamily.</text>
</comment>
<proteinExistence type="inferred from homology"/>
<dbReference type="EC" id="5.4.99.62" evidence="1"/>
<dbReference type="EMBL" id="BX571856">
    <property type="protein sequence ID" value="CAG39293.1"/>
    <property type="molecule type" value="Genomic_DNA"/>
</dbReference>
<dbReference type="RefSeq" id="WP_000747873.1">
    <property type="nucleotide sequence ID" value="NC_002952.2"/>
</dbReference>
<dbReference type="SMR" id="Q6GK42"/>
<dbReference type="KEGG" id="sar:SAR0267"/>
<dbReference type="HOGENOM" id="CLU_135498_0_0_9"/>
<dbReference type="UniPathway" id="UPA00916">
    <property type="reaction ID" value="UER00888"/>
</dbReference>
<dbReference type="Proteomes" id="UP000000596">
    <property type="component" value="Chromosome"/>
</dbReference>
<dbReference type="GO" id="GO:0005829">
    <property type="term" value="C:cytosol"/>
    <property type="evidence" value="ECO:0007669"/>
    <property type="project" value="TreeGrafter"/>
</dbReference>
<dbReference type="GO" id="GO:0062193">
    <property type="term" value="F:D-ribose pyranase activity"/>
    <property type="evidence" value="ECO:0007669"/>
    <property type="project" value="UniProtKB-EC"/>
</dbReference>
<dbReference type="GO" id="GO:0016872">
    <property type="term" value="F:intramolecular lyase activity"/>
    <property type="evidence" value="ECO:0007669"/>
    <property type="project" value="UniProtKB-UniRule"/>
</dbReference>
<dbReference type="GO" id="GO:0048029">
    <property type="term" value="F:monosaccharide binding"/>
    <property type="evidence" value="ECO:0007669"/>
    <property type="project" value="InterPro"/>
</dbReference>
<dbReference type="GO" id="GO:0019303">
    <property type="term" value="P:D-ribose catabolic process"/>
    <property type="evidence" value="ECO:0007669"/>
    <property type="project" value="UniProtKB-UniRule"/>
</dbReference>
<dbReference type="FunFam" id="3.40.1650.10:FF:000004">
    <property type="entry name" value="D-ribose pyranase"/>
    <property type="match status" value="1"/>
</dbReference>
<dbReference type="Gene3D" id="3.40.1650.10">
    <property type="entry name" value="RbsD-like domain"/>
    <property type="match status" value="1"/>
</dbReference>
<dbReference type="HAMAP" id="MF_01661">
    <property type="entry name" value="D_rib_pyranase"/>
    <property type="match status" value="1"/>
</dbReference>
<dbReference type="InterPro" id="IPR023064">
    <property type="entry name" value="D-ribose_pyranase"/>
</dbReference>
<dbReference type="InterPro" id="IPR023750">
    <property type="entry name" value="RbsD-like_sf"/>
</dbReference>
<dbReference type="InterPro" id="IPR007721">
    <property type="entry name" value="RbsD_FucU"/>
</dbReference>
<dbReference type="NCBIfam" id="NF008761">
    <property type="entry name" value="PRK11797.1"/>
    <property type="match status" value="1"/>
</dbReference>
<dbReference type="PANTHER" id="PTHR37831">
    <property type="entry name" value="D-RIBOSE PYRANASE"/>
    <property type="match status" value="1"/>
</dbReference>
<dbReference type="PANTHER" id="PTHR37831:SF1">
    <property type="entry name" value="D-RIBOSE PYRANASE"/>
    <property type="match status" value="1"/>
</dbReference>
<dbReference type="Pfam" id="PF05025">
    <property type="entry name" value="RbsD_FucU"/>
    <property type="match status" value="1"/>
</dbReference>
<dbReference type="SUPFAM" id="SSF102546">
    <property type="entry name" value="RbsD-like"/>
    <property type="match status" value="1"/>
</dbReference>
<keyword id="KW-0119">Carbohydrate metabolism</keyword>
<keyword id="KW-0963">Cytoplasm</keyword>
<keyword id="KW-0413">Isomerase</keyword>
<reference key="1">
    <citation type="journal article" date="2004" name="Proc. Natl. Acad. Sci. U.S.A.">
        <title>Complete genomes of two clinical Staphylococcus aureus strains: evidence for the rapid evolution of virulence and drug resistance.</title>
        <authorList>
            <person name="Holden M.T.G."/>
            <person name="Feil E.J."/>
            <person name="Lindsay J.A."/>
            <person name="Peacock S.J."/>
            <person name="Day N.P.J."/>
            <person name="Enright M.C."/>
            <person name="Foster T.J."/>
            <person name="Moore C.E."/>
            <person name="Hurst L."/>
            <person name="Atkin R."/>
            <person name="Barron A."/>
            <person name="Bason N."/>
            <person name="Bentley S.D."/>
            <person name="Chillingworth C."/>
            <person name="Chillingworth T."/>
            <person name="Churcher C."/>
            <person name="Clark L."/>
            <person name="Corton C."/>
            <person name="Cronin A."/>
            <person name="Doggett J."/>
            <person name="Dowd L."/>
            <person name="Feltwell T."/>
            <person name="Hance Z."/>
            <person name="Harris B."/>
            <person name="Hauser H."/>
            <person name="Holroyd S."/>
            <person name="Jagels K."/>
            <person name="James K.D."/>
            <person name="Lennard N."/>
            <person name="Line A."/>
            <person name="Mayes R."/>
            <person name="Moule S."/>
            <person name="Mungall K."/>
            <person name="Ormond D."/>
            <person name="Quail M.A."/>
            <person name="Rabbinowitsch E."/>
            <person name="Rutherford K.M."/>
            <person name="Sanders M."/>
            <person name="Sharp S."/>
            <person name="Simmonds M."/>
            <person name="Stevens K."/>
            <person name="Whitehead S."/>
            <person name="Barrell B.G."/>
            <person name="Spratt B.G."/>
            <person name="Parkhill J."/>
        </authorList>
    </citation>
    <scope>NUCLEOTIDE SEQUENCE [LARGE SCALE GENOMIC DNA]</scope>
    <source>
        <strain>MRSA252</strain>
    </source>
</reference>
<organism>
    <name type="scientific">Staphylococcus aureus (strain MRSA252)</name>
    <dbReference type="NCBI Taxonomy" id="282458"/>
    <lineage>
        <taxon>Bacteria</taxon>
        <taxon>Bacillati</taxon>
        <taxon>Bacillota</taxon>
        <taxon>Bacilli</taxon>
        <taxon>Bacillales</taxon>
        <taxon>Staphylococcaceae</taxon>
        <taxon>Staphylococcus</taxon>
    </lineage>
</organism>